<reference key="1">
    <citation type="journal article" date="2007" name="J. Bacteriol.">
        <title>Complete genome sequence of Haemophilus somnus (Histophilus somni) strain 129Pt and comparison to Haemophilus ducreyi 35000HP and Haemophilus influenzae Rd.</title>
        <authorList>
            <person name="Challacombe J.F."/>
            <person name="Duncan A.J."/>
            <person name="Brettin T.S."/>
            <person name="Bruce D."/>
            <person name="Chertkov O."/>
            <person name="Detter J.C."/>
            <person name="Han C.S."/>
            <person name="Misra M."/>
            <person name="Richardson P."/>
            <person name="Tapia R."/>
            <person name="Thayer N."/>
            <person name="Xie G."/>
            <person name="Inzana T.J."/>
        </authorList>
    </citation>
    <scope>NUCLEOTIDE SEQUENCE [LARGE SCALE GENOMIC DNA]</scope>
    <source>
        <strain>129Pt</strain>
    </source>
</reference>
<accession>Q0I544</accession>
<feature type="chain" id="PRO_1000045717" description="Protein SlyX homolog">
    <location>
        <begin position="1"/>
        <end position="73"/>
    </location>
</feature>
<protein>
    <recommendedName>
        <fullName evidence="1">Protein SlyX homolog</fullName>
    </recommendedName>
</protein>
<gene>
    <name evidence="1" type="primary">slyX</name>
    <name type="ordered locus">HS_1638</name>
</gene>
<organism>
    <name type="scientific">Histophilus somni (strain 129Pt)</name>
    <name type="common">Haemophilus somnus</name>
    <dbReference type="NCBI Taxonomy" id="205914"/>
    <lineage>
        <taxon>Bacteria</taxon>
        <taxon>Pseudomonadati</taxon>
        <taxon>Pseudomonadota</taxon>
        <taxon>Gammaproteobacteria</taxon>
        <taxon>Pasteurellales</taxon>
        <taxon>Pasteurellaceae</taxon>
        <taxon>Histophilus</taxon>
    </lineage>
</organism>
<proteinExistence type="inferred from homology"/>
<sequence>MPQTQELDQRIAELEMKIAFQENTLEELNQALIDQQFVLDKMQLQLRYMASKLKDLQSSNIATQAEETPPPHY</sequence>
<evidence type="ECO:0000255" key="1">
    <source>
        <dbReference type="HAMAP-Rule" id="MF_00715"/>
    </source>
</evidence>
<dbReference type="EMBL" id="CP000436">
    <property type="protein sequence ID" value="ABI25906.1"/>
    <property type="molecule type" value="Genomic_DNA"/>
</dbReference>
<dbReference type="SMR" id="Q0I544"/>
<dbReference type="KEGG" id="hso:HS_1638"/>
<dbReference type="eggNOG" id="COG2900">
    <property type="taxonomic scope" value="Bacteria"/>
</dbReference>
<dbReference type="HOGENOM" id="CLU_180796_4_0_6"/>
<dbReference type="Gene3D" id="1.20.5.300">
    <property type="match status" value="1"/>
</dbReference>
<dbReference type="HAMAP" id="MF_00715">
    <property type="entry name" value="SlyX"/>
    <property type="match status" value="1"/>
</dbReference>
<dbReference type="InterPro" id="IPR007236">
    <property type="entry name" value="SlyX"/>
</dbReference>
<dbReference type="NCBIfam" id="NF002556">
    <property type="entry name" value="PRK02119.1"/>
    <property type="match status" value="1"/>
</dbReference>
<dbReference type="PANTHER" id="PTHR36508">
    <property type="entry name" value="PROTEIN SLYX"/>
    <property type="match status" value="1"/>
</dbReference>
<dbReference type="PANTHER" id="PTHR36508:SF1">
    <property type="entry name" value="PROTEIN SLYX"/>
    <property type="match status" value="1"/>
</dbReference>
<dbReference type="Pfam" id="PF04102">
    <property type="entry name" value="SlyX"/>
    <property type="match status" value="1"/>
</dbReference>
<comment type="similarity">
    <text evidence="1">Belongs to the SlyX family.</text>
</comment>
<name>SLYX_HISS1</name>